<dbReference type="EC" id="3.1.26.4"/>
<dbReference type="EMBL" id="AE000512">
    <property type="protein sequence ID" value="AAD35996.1"/>
    <property type="molecule type" value="Genomic_DNA"/>
</dbReference>
<dbReference type="PIR" id="B72320">
    <property type="entry name" value="B72320"/>
</dbReference>
<dbReference type="RefSeq" id="NP_228723.1">
    <property type="nucleotide sequence ID" value="NC_000853.1"/>
</dbReference>
<dbReference type="RefSeq" id="WP_004080647.1">
    <property type="nucleotide sequence ID" value="NZ_CP011107.1"/>
</dbReference>
<dbReference type="PDB" id="2ETJ">
    <property type="method" value="X-ray"/>
    <property type="resolution" value="1.74 A"/>
    <property type="chains" value="A=1-238"/>
</dbReference>
<dbReference type="PDB" id="3O3F">
    <property type="method" value="X-ray"/>
    <property type="resolution" value="2.00 A"/>
    <property type="chains" value="A=2-223"/>
</dbReference>
<dbReference type="PDB" id="3O3G">
    <property type="method" value="X-ray"/>
    <property type="resolution" value="2.10 A"/>
    <property type="chains" value="A=2-223"/>
</dbReference>
<dbReference type="PDB" id="3O3H">
    <property type="method" value="X-ray"/>
    <property type="resolution" value="2.80 A"/>
    <property type="chains" value="A=2-223"/>
</dbReference>
<dbReference type="PDB" id="4HHT">
    <property type="method" value="X-ray"/>
    <property type="resolution" value="3.10 A"/>
    <property type="chains" value="A=2-238"/>
</dbReference>
<dbReference type="PDBsum" id="2ETJ"/>
<dbReference type="PDBsum" id="3O3F"/>
<dbReference type="PDBsum" id="3O3G"/>
<dbReference type="PDBsum" id="3O3H"/>
<dbReference type="PDBsum" id="4HHT"/>
<dbReference type="SMR" id="Q9X017"/>
<dbReference type="FunCoup" id="Q9X017">
    <property type="interactions" value="378"/>
</dbReference>
<dbReference type="STRING" id="243274.TM_0915"/>
<dbReference type="PaxDb" id="243274-THEMA_00060"/>
<dbReference type="EnsemblBacteria" id="AAD35996">
    <property type="protein sequence ID" value="AAD35996"/>
    <property type="gene ID" value="TM_0915"/>
</dbReference>
<dbReference type="KEGG" id="tma:TM0915"/>
<dbReference type="KEGG" id="tmi:THEMA_00060"/>
<dbReference type="KEGG" id="tmm:Tmari_0917"/>
<dbReference type="KEGG" id="tmw:THMA_0937"/>
<dbReference type="eggNOG" id="COG0164">
    <property type="taxonomic scope" value="Bacteria"/>
</dbReference>
<dbReference type="InParanoid" id="Q9X017"/>
<dbReference type="OrthoDB" id="9803420at2"/>
<dbReference type="BRENDA" id="3.1.26.4">
    <property type="organism ID" value="6331"/>
</dbReference>
<dbReference type="EvolutionaryTrace" id="Q9X017"/>
<dbReference type="Proteomes" id="UP000008183">
    <property type="component" value="Chromosome"/>
</dbReference>
<dbReference type="GO" id="GO:0005737">
    <property type="term" value="C:cytoplasm"/>
    <property type="evidence" value="ECO:0007669"/>
    <property type="project" value="UniProtKB-SubCell"/>
</dbReference>
<dbReference type="GO" id="GO:0032299">
    <property type="term" value="C:ribonuclease H2 complex"/>
    <property type="evidence" value="ECO:0000318"/>
    <property type="project" value="GO_Central"/>
</dbReference>
<dbReference type="GO" id="GO:0030145">
    <property type="term" value="F:manganese ion binding"/>
    <property type="evidence" value="ECO:0007669"/>
    <property type="project" value="UniProtKB-UniRule"/>
</dbReference>
<dbReference type="GO" id="GO:0003723">
    <property type="term" value="F:RNA binding"/>
    <property type="evidence" value="ECO:0007669"/>
    <property type="project" value="InterPro"/>
</dbReference>
<dbReference type="GO" id="GO:0004523">
    <property type="term" value="F:RNA-DNA hybrid ribonuclease activity"/>
    <property type="evidence" value="ECO:0000318"/>
    <property type="project" value="GO_Central"/>
</dbReference>
<dbReference type="GO" id="GO:0043137">
    <property type="term" value="P:DNA replication, removal of RNA primer"/>
    <property type="evidence" value="ECO:0000318"/>
    <property type="project" value="GO_Central"/>
</dbReference>
<dbReference type="GO" id="GO:0006298">
    <property type="term" value="P:mismatch repair"/>
    <property type="evidence" value="ECO:0000318"/>
    <property type="project" value="GO_Central"/>
</dbReference>
<dbReference type="CDD" id="cd07182">
    <property type="entry name" value="RNase_HII_bacteria_HII_like"/>
    <property type="match status" value="1"/>
</dbReference>
<dbReference type="FunFam" id="3.30.420.10:FF:000142">
    <property type="entry name" value="Ribonuclease HII"/>
    <property type="match status" value="1"/>
</dbReference>
<dbReference type="Gene3D" id="3.30.420.10">
    <property type="entry name" value="Ribonuclease H-like superfamily/Ribonuclease H"/>
    <property type="match status" value="1"/>
</dbReference>
<dbReference type="HAMAP" id="MF_00052_B">
    <property type="entry name" value="RNase_HII_B"/>
    <property type="match status" value="1"/>
</dbReference>
<dbReference type="InterPro" id="IPR022898">
    <property type="entry name" value="RNase_HII"/>
</dbReference>
<dbReference type="InterPro" id="IPR001352">
    <property type="entry name" value="RNase_HII/HIII"/>
</dbReference>
<dbReference type="InterPro" id="IPR024567">
    <property type="entry name" value="RNase_HII/HIII_dom"/>
</dbReference>
<dbReference type="InterPro" id="IPR012337">
    <property type="entry name" value="RNaseH-like_sf"/>
</dbReference>
<dbReference type="InterPro" id="IPR036397">
    <property type="entry name" value="RNaseH_sf"/>
</dbReference>
<dbReference type="NCBIfam" id="NF000594">
    <property type="entry name" value="PRK00015.1-1"/>
    <property type="match status" value="1"/>
</dbReference>
<dbReference type="NCBIfam" id="NF000595">
    <property type="entry name" value="PRK00015.1-3"/>
    <property type="match status" value="1"/>
</dbReference>
<dbReference type="PANTHER" id="PTHR10954">
    <property type="entry name" value="RIBONUCLEASE H2 SUBUNIT A"/>
    <property type="match status" value="1"/>
</dbReference>
<dbReference type="PANTHER" id="PTHR10954:SF18">
    <property type="entry name" value="RIBONUCLEASE HII"/>
    <property type="match status" value="1"/>
</dbReference>
<dbReference type="Pfam" id="PF01351">
    <property type="entry name" value="RNase_HII"/>
    <property type="match status" value="1"/>
</dbReference>
<dbReference type="SUPFAM" id="SSF53098">
    <property type="entry name" value="Ribonuclease H-like"/>
    <property type="match status" value="1"/>
</dbReference>
<dbReference type="PROSITE" id="PS51975">
    <property type="entry name" value="RNASE_H_2"/>
    <property type="match status" value="1"/>
</dbReference>
<reference key="1">
    <citation type="journal article" date="1999" name="Nature">
        <title>Evidence for lateral gene transfer between Archaea and Bacteria from genome sequence of Thermotoga maritima.</title>
        <authorList>
            <person name="Nelson K.E."/>
            <person name="Clayton R.A."/>
            <person name="Gill S.R."/>
            <person name="Gwinn M.L."/>
            <person name="Dodson R.J."/>
            <person name="Haft D.H."/>
            <person name="Hickey E.K."/>
            <person name="Peterson J.D."/>
            <person name="Nelson W.C."/>
            <person name="Ketchum K.A."/>
            <person name="McDonald L.A."/>
            <person name="Utterback T.R."/>
            <person name="Malek J.A."/>
            <person name="Linher K.D."/>
            <person name="Garrett M.M."/>
            <person name="Stewart A.M."/>
            <person name="Cotton M.D."/>
            <person name="Pratt M.S."/>
            <person name="Phillips C.A."/>
            <person name="Richardson D.L."/>
            <person name="Heidelberg J.F."/>
            <person name="Sutton G.G."/>
            <person name="Fleischmann R.D."/>
            <person name="Eisen J.A."/>
            <person name="White O."/>
            <person name="Salzberg S.L."/>
            <person name="Smith H.O."/>
            <person name="Venter J.C."/>
            <person name="Fraser C.M."/>
        </authorList>
    </citation>
    <scope>NUCLEOTIDE SEQUENCE [LARGE SCALE GENOMIC DNA]</scope>
    <source>
        <strain>ATCC 43589 / DSM 3109 / JCM 10099 / NBRC 100826 / MSB8</strain>
    </source>
</reference>
<accession>Q9X017</accession>
<proteinExistence type="evidence at protein level"/>
<evidence type="ECO:0000250" key="1"/>
<evidence type="ECO:0000255" key="2">
    <source>
        <dbReference type="PROSITE-ProRule" id="PRU01319"/>
    </source>
</evidence>
<evidence type="ECO:0000305" key="3"/>
<evidence type="ECO:0007829" key="4">
    <source>
        <dbReference type="PDB" id="2ETJ"/>
    </source>
</evidence>
<evidence type="ECO:0007829" key="5">
    <source>
        <dbReference type="PDB" id="3O3F"/>
    </source>
</evidence>
<evidence type="ECO:0007829" key="6">
    <source>
        <dbReference type="PDB" id="4HHT"/>
    </source>
</evidence>
<organism>
    <name type="scientific">Thermotoga maritima (strain ATCC 43589 / DSM 3109 / JCM 10099 / NBRC 100826 / MSB8)</name>
    <dbReference type="NCBI Taxonomy" id="243274"/>
    <lineage>
        <taxon>Bacteria</taxon>
        <taxon>Thermotogati</taxon>
        <taxon>Thermotogota</taxon>
        <taxon>Thermotogae</taxon>
        <taxon>Thermotogales</taxon>
        <taxon>Thermotogaceae</taxon>
        <taxon>Thermotoga</taxon>
    </lineage>
</organism>
<comment type="function">
    <text evidence="1">Endonuclease that specifically degrades the RNA of RNA-DNA hybrids.</text>
</comment>
<comment type="catalytic activity">
    <reaction>
        <text>Endonucleolytic cleavage to 5'-phosphomonoester.</text>
        <dbReference type="EC" id="3.1.26.4"/>
    </reaction>
</comment>
<comment type="cofactor">
    <cofactor evidence="1">
        <name>Mn(2+)</name>
        <dbReference type="ChEBI" id="CHEBI:29035"/>
    </cofactor>
    <cofactor evidence="1">
        <name>Mg(2+)</name>
        <dbReference type="ChEBI" id="CHEBI:18420"/>
    </cofactor>
    <text evidence="1">Manganese or magnesium. Binds 1 divalent metal ion per monomer in the absence of substrate. May bind a second metal ion after substrate binding.</text>
</comment>
<comment type="subcellular location">
    <subcellularLocation>
        <location evidence="3">Cytoplasm</location>
    </subcellularLocation>
</comment>
<comment type="similarity">
    <text evidence="3">Belongs to the RNase HII family.</text>
</comment>
<feature type="chain" id="PRO_0000111643" description="Ribonuclease HII">
    <location>
        <begin position="1"/>
        <end position="238"/>
    </location>
</feature>
<feature type="domain" description="RNase H type-2" evidence="2">
    <location>
        <begin position="12"/>
        <end position="197"/>
    </location>
</feature>
<feature type="binding site" evidence="1">
    <location>
        <position position="18"/>
    </location>
    <ligand>
        <name>a divalent metal cation</name>
        <dbReference type="ChEBI" id="CHEBI:60240"/>
    </ligand>
</feature>
<feature type="binding site" evidence="1">
    <location>
        <position position="19"/>
    </location>
    <ligand>
        <name>a divalent metal cation</name>
        <dbReference type="ChEBI" id="CHEBI:60240"/>
    </ligand>
</feature>
<feature type="binding site" evidence="1">
    <location>
        <position position="107"/>
    </location>
    <ligand>
        <name>a divalent metal cation</name>
        <dbReference type="ChEBI" id="CHEBI:60240"/>
    </ligand>
</feature>
<feature type="helix" evidence="4">
    <location>
        <begin position="3"/>
        <end position="7"/>
    </location>
</feature>
<feature type="turn" evidence="4">
    <location>
        <begin position="8"/>
        <end position="10"/>
    </location>
</feature>
<feature type="strand" evidence="4">
    <location>
        <begin position="11"/>
        <end position="20"/>
    </location>
</feature>
<feature type="strand" evidence="4">
    <location>
        <begin position="25"/>
        <end position="27"/>
    </location>
</feature>
<feature type="strand" evidence="4">
    <location>
        <begin position="29"/>
        <end position="36"/>
    </location>
</feature>
<feature type="turn" evidence="6">
    <location>
        <begin position="41"/>
        <end position="44"/>
    </location>
</feature>
<feature type="helix" evidence="5">
    <location>
        <begin position="46"/>
        <end position="48"/>
    </location>
</feature>
<feature type="helix" evidence="4">
    <location>
        <begin position="53"/>
        <end position="64"/>
    </location>
</feature>
<feature type="strand" evidence="4">
    <location>
        <begin position="65"/>
        <end position="72"/>
    </location>
</feature>
<feature type="helix" evidence="4">
    <location>
        <begin position="74"/>
        <end position="80"/>
    </location>
</feature>
<feature type="helix" evidence="4">
    <location>
        <begin position="82"/>
        <end position="96"/>
    </location>
</feature>
<feature type="strand" evidence="4">
    <location>
        <begin position="97"/>
        <end position="99"/>
    </location>
</feature>
<feature type="strand" evidence="4">
    <location>
        <begin position="102"/>
        <end position="110"/>
    </location>
</feature>
<feature type="strand" evidence="4">
    <location>
        <begin position="117"/>
        <end position="120"/>
    </location>
</feature>
<feature type="helix" evidence="4">
    <location>
        <begin position="123"/>
        <end position="126"/>
    </location>
</feature>
<feature type="helix" evidence="4">
    <location>
        <begin position="128"/>
        <end position="151"/>
    </location>
</feature>
<feature type="helix" evidence="4">
    <location>
        <begin position="157"/>
        <end position="160"/>
    </location>
</feature>
<feature type="helix" evidence="4">
    <location>
        <begin position="166"/>
        <end position="175"/>
    </location>
</feature>
<feature type="helix" evidence="4">
    <location>
        <begin position="186"/>
        <end position="189"/>
    </location>
</feature>
<feature type="helix" evidence="4">
    <location>
        <begin position="194"/>
        <end position="202"/>
    </location>
</feature>
<feature type="helix" evidence="4">
    <location>
        <begin position="208"/>
        <end position="219"/>
    </location>
</feature>
<feature type="turn" evidence="5">
    <location>
        <begin position="220"/>
        <end position="222"/>
    </location>
</feature>
<protein>
    <recommendedName>
        <fullName>Ribonuclease HII</fullName>
        <shortName>RNase HII</shortName>
        <ecNumber>3.1.26.4</ecNumber>
    </recommendedName>
</protein>
<name>RNH2_THEMA</name>
<gene>
    <name type="primary">rnhB</name>
    <name type="ordered locus">TM_0915</name>
</gene>
<keyword id="KW-0002">3D-structure</keyword>
<keyword id="KW-0963">Cytoplasm</keyword>
<keyword id="KW-0255">Endonuclease</keyword>
<keyword id="KW-0378">Hydrolase</keyword>
<keyword id="KW-0464">Manganese</keyword>
<keyword id="KW-0479">Metal-binding</keyword>
<keyword id="KW-0540">Nuclease</keyword>
<keyword id="KW-1185">Reference proteome</keyword>
<sequence length="238" mass="26630">MGIDELYKKEFGIVAGVDEAGRGCLAGPVVAAAVVLEKEIEGINDSKQLSPAKRERLLDEIMEKAAVGIGIASPEEIDLYNIFNATKLAMNRALENLSVKPSFVLVDGKGIELSVPGTCLVKGDQKSKLIGAASIVAKVFRDRLMSEFHRMYPQFSFHKHKGYATKEHLNEIRKNGVLPIHRLSFEPVLELLTDDLLREFFEKGLISENRFERILNLLGARKSVVFRKERTNHNLPLF</sequence>